<comment type="function">
    <text evidence="1">Catalyzes the reduction of the glycolytic intermediate dihydroxyacetone phosphate (DHAP) to sn-glycerol 3-phosphate (G3P), the key precursor for phospholipid synthesis.</text>
</comment>
<comment type="catalytic activity">
    <reaction evidence="1">
        <text>sn-glycerol 3-phosphate + NAD(+) = dihydroxyacetone phosphate + NADH + H(+)</text>
        <dbReference type="Rhea" id="RHEA:11092"/>
        <dbReference type="ChEBI" id="CHEBI:15378"/>
        <dbReference type="ChEBI" id="CHEBI:57540"/>
        <dbReference type="ChEBI" id="CHEBI:57597"/>
        <dbReference type="ChEBI" id="CHEBI:57642"/>
        <dbReference type="ChEBI" id="CHEBI:57945"/>
        <dbReference type="EC" id="1.1.1.94"/>
    </reaction>
    <physiologicalReaction direction="right-to-left" evidence="1">
        <dbReference type="Rhea" id="RHEA:11094"/>
    </physiologicalReaction>
</comment>
<comment type="catalytic activity">
    <reaction evidence="1">
        <text>sn-glycerol 3-phosphate + NADP(+) = dihydroxyacetone phosphate + NADPH + H(+)</text>
        <dbReference type="Rhea" id="RHEA:11096"/>
        <dbReference type="ChEBI" id="CHEBI:15378"/>
        <dbReference type="ChEBI" id="CHEBI:57597"/>
        <dbReference type="ChEBI" id="CHEBI:57642"/>
        <dbReference type="ChEBI" id="CHEBI:57783"/>
        <dbReference type="ChEBI" id="CHEBI:58349"/>
        <dbReference type="EC" id="1.1.1.94"/>
    </reaction>
    <physiologicalReaction direction="right-to-left" evidence="1">
        <dbReference type="Rhea" id="RHEA:11098"/>
    </physiologicalReaction>
</comment>
<comment type="pathway">
    <text evidence="1">Membrane lipid metabolism; glycerophospholipid metabolism.</text>
</comment>
<comment type="subcellular location">
    <subcellularLocation>
        <location evidence="1">Cytoplasm</location>
    </subcellularLocation>
</comment>
<comment type="similarity">
    <text evidence="1">Belongs to the NAD-dependent glycerol-3-phosphate dehydrogenase family.</text>
</comment>
<keyword id="KW-0963">Cytoplasm</keyword>
<keyword id="KW-0444">Lipid biosynthesis</keyword>
<keyword id="KW-0443">Lipid metabolism</keyword>
<keyword id="KW-0520">NAD</keyword>
<keyword id="KW-0521">NADP</keyword>
<keyword id="KW-0547">Nucleotide-binding</keyword>
<keyword id="KW-0560">Oxidoreductase</keyword>
<keyword id="KW-0594">Phospholipid biosynthesis</keyword>
<keyword id="KW-1208">Phospholipid metabolism</keyword>
<accession>Q1R4Y7</accession>
<dbReference type="EC" id="1.1.1.94" evidence="1"/>
<dbReference type="EMBL" id="CP000243">
    <property type="protein sequence ID" value="ABE09577.1"/>
    <property type="molecule type" value="Genomic_DNA"/>
</dbReference>
<dbReference type="RefSeq" id="WP_001076194.1">
    <property type="nucleotide sequence ID" value="NZ_CP064825.1"/>
</dbReference>
<dbReference type="SMR" id="Q1R4Y7"/>
<dbReference type="GeneID" id="93778322"/>
<dbReference type="KEGG" id="eci:UTI89_C4149"/>
<dbReference type="HOGENOM" id="CLU_033449_0_2_6"/>
<dbReference type="UniPathway" id="UPA00940"/>
<dbReference type="Proteomes" id="UP000001952">
    <property type="component" value="Chromosome"/>
</dbReference>
<dbReference type="GO" id="GO:0005829">
    <property type="term" value="C:cytosol"/>
    <property type="evidence" value="ECO:0007669"/>
    <property type="project" value="TreeGrafter"/>
</dbReference>
<dbReference type="GO" id="GO:0047952">
    <property type="term" value="F:glycerol-3-phosphate dehydrogenase [NAD(P)+] activity"/>
    <property type="evidence" value="ECO:0007669"/>
    <property type="project" value="UniProtKB-UniRule"/>
</dbReference>
<dbReference type="GO" id="GO:0051287">
    <property type="term" value="F:NAD binding"/>
    <property type="evidence" value="ECO:0007669"/>
    <property type="project" value="InterPro"/>
</dbReference>
<dbReference type="GO" id="GO:0005975">
    <property type="term" value="P:carbohydrate metabolic process"/>
    <property type="evidence" value="ECO:0007669"/>
    <property type="project" value="InterPro"/>
</dbReference>
<dbReference type="GO" id="GO:0046167">
    <property type="term" value="P:glycerol-3-phosphate biosynthetic process"/>
    <property type="evidence" value="ECO:0007669"/>
    <property type="project" value="UniProtKB-UniRule"/>
</dbReference>
<dbReference type="GO" id="GO:0046168">
    <property type="term" value="P:glycerol-3-phosphate catabolic process"/>
    <property type="evidence" value="ECO:0007669"/>
    <property type="project" value="InterPro"/>
</dbReference>
<dbReference type="GO" id="GO:0046474">
    <property type="term" value="P:glycerophospholipid biosynthetic process"/>
    <property type="evidence" value="ECO:0007669"/>
    <property type="project" value="TreeGrafter"/>
</dbReference>
<dbReference type="FunFam" id="1.10.1040.10:FF:000001">
    <property type="entry name" value="Glycerol-3-phosphate dehydrogenase [NAD(P)+]"/>
    <property type="match status" value="1"/>
</dbReference>
<dbReference type="FunFam" id="3.40.50.720:FF:000019">
    <property type="entry name" value="Glycerol-3-phosphate dehydrogenase [NAD(P)+]"/>
    <property type="match status" value="1"/>
</dbReference>
<dbReference type="Gene3D" id="1.10.1040.10">
    <property type="entry name" value="N-(1-d-carboxylethyl)-l-norvaline Dehydrogenase, domain 2"/>
    <property type="match status" value="1"/>
</dbReference>
<dbReference type="Gene3D" id="3.40.50.720">
    <property type="entry name" value="NAD(P)-binding Rossmann-like Domain"/>
    <property type="match status" value="1"/>
</dbReference>
<dbReference type="HAMAP" id="MF_00394">
    <property type="entry name" value="NAD_Glyc3P_dehydrog"/>
    <property type="match status" value="1"/>
</dbReference>
<dbReference type="InterPro" id="IPR008927">
    <property type="entry name" value="6-PGluconate_DH-like_C_sf"/>
</dbReference>
<dbReference type="InterPro" id="IPR013328">
    <property type="entry name" value="6PGD_dom2"/>
</dbReference>
<dbReference type="InterPro" id="IPR006168">
    <property type="entry name" value="G3P_DH_NAD-dep"/>
</dbReference>
<dbReference type="InterPro" id="IPR006109">
    <property type="entry name" value="G3P_DH_NAD-dep_C"/>
</dbReference>
<dbReference type="InterPro" id="IPR011128">
    <property type="entry name" value="G3P_DH_NAD-dep_N"/>
</dbReference>
<dbReference type="InterPro" id="IPR036291">
    <property type="entry name" value="NAD(P)-bd_dom_sf"/>
</dbReference>
<dbReference type="NCBIfam" id="NF000939">
    <property type="entry name" value="PRK00094.1-1"/>
    <property type="match status" value="1"/>
</dbReference>
<dbReference type="NCBIfam" id="NF000940">
    <property type="entry name" value="PRK00094.1-2"/>
    <property type="match status" value="1"/>
</dbReference>
<dbReference type="NCBIfam" id="NF000942">
    <property type="entry name" value="PRK00094.1-4"/>
    <property type="match status" value="1"/>
</dbReference>
<dbReference type="PANTHER" id="PTHR11728">
    <property type="entry name" value="GLYCEROL-3-PHOSPHATE DEHYDROGENASE"/>
    <property type="match status" value="1"/>
</dbReference>
<dbReference type="PANTHER" id="PTHR11728:SF1">
    <property type="entry name" value="GLYCEROL-3-PHOSPHATE DEHYDROGENASE [NAD(+)] 2, CHLOROPLASTIC"/>
    <property type="match status" value="1"/>
</dbReference>
<dbReference type="Pfam" id="PF07479">
    <property type="entry name" value="NAD_Gly3P_dh_C"/>
    <property type="match status" value="1"/>
</dbReference>
<dbReference type="Pfam" id="PF01210">
    <property type="entry name" value="NAD_Gly3P_dh_N"/>
    <property type="match status" value="1"/>
</dbReference>
<dbReference type="PIRSF" id="PIRSF000114">
    <property type="entry name" value="Glycerol-3-P_dh"/>
    <property type="match status" value="1"/>
</dbReference>
<dbReference type="PRINTS" id="PR00077">
    <property type="entry name" value="GPDHDRGNASE"/>
</dbReference>
<dbReference type="SUPFAM" id="SSF48179">
    <property type="entry name" value="6-phosphogluconate dehydrogenase C-terminal domain-like"/>
    <property type="match status" value="1"/>
</dbReference>
<dbReference type="SUPFAM" id="SSF51735">
    <property type="entry name" value="NAD(P)-binding Rossmann-fold domains"/>
    <property type="match status" value="1"/>
</dbReference>
<dbReference type="PROSITE" id="PS00957">
    <property type="entry name" value="NAD_G3PDH"/>
    <property type="match status" value="1"/>
</dbReference>
<feature type="chain" id="PRO_0000255312" description="Glycerol-3-phosphate dehydrogenase [NAD(P)+]">
    <location>
        <begin position="1"/>
        <end position="339"/>
    </location>
</feature>
<feature type="active site" description="Proton acceptor" evidence="1">
    <location>
        <position position="195"/>
    </location>
</feature>
<feature type="binding site" evidence="1">
    <location>
        <position position="15"/>
    </location>
    <ligand>
        <name>NADPH</name>
        <dbReference type="ChEBI" id="CHEBI:57783"/>
    </ligand>
</feature>
<feature type="binding site" evidence="1">
    <location>
        <position position="16"/>
    </location>
    <ligand>
        <name>NADPH</name>
        <dbReference type="ChEBI" id="CHEBI:57783"/>
    </ligand>
</feature>
<feature type="binding site" evidence="1">
    <location>
        <position position="36"/>
    </location>
    <ligand>
        <name>NADPH</name>
        <dbReference type="ChEBI" id="CHEBI:57783"/>
    </ligand>
</feature>
<feature type="binding site" evidence="1">
    <location>
        <position position="110"/>
    </location>
    <ligand>
        <name>NADPH</name>
        <dbReference type="ChEBI" id="CHEBI:57783"/>
    </ligand>
</feature>
<feature type="binding site" evidence="1">
    <location>
        <position position="110"/>
    </location>
    <ligand>
        <name>sn-glycerol 3-phosphate</name>
        <dbReference type="ChEBI" id="CHEBI:57597"/>
    </ligand>
</feature>
<feature type="binding site" evidence="1">
    <location>
        <position position="139"/>
    </location>
    <ligand>
        <name>sn-glycerol 3-phosphate</name>
        <dbReference type="ChEBI" id="CHEBI:57597"/>
    </ligand>
</feature>
<feature type="binding site" evidence="1">
    <location>
        <position position="141"/>
    </location>
    <ligand>
        <name>sn-glycerol 3-phosphate</name>
        <dbReference type="ChEBI" id="CHEBI:57597"/>
    </ligand>
</feature>
<feature type="binding site" evidence="1">
    <location>
        <position position="143"/>
    </location>
    <ligand>
        <name>NADPH</name>
        <dbReference type="ChEBI" id="CHEBI:57783"/>
    </ligand>
</feature>
<feature type="binding site" evidence="1">
    <location>
        <position position="195"/>
    </location>
    <ligand>
        <name>sn-glycerol 3-phosphate</name>
        <dbReference type="ChEBI" id="CHEBI:57597"/>
    </ligand>
</feature>
<feature type="binding site" evidence="1">
    <location>
        <position position="248"/>
    </location>
    <ligand>
        <name>sn-glycerol 3-phosphate</name>
        <dbReference type="ChEBI" id="CHEBI:57597"/>
    </ligand>
</feature>
<feature type="binding site" evidence="1">
    <location>
        <position position="258"/>
    </location>
    <ligand>
        <name>sn-glycerol 3-phosphate</name>
        <dbReference type="ChEBI" id="CHEBI:57597"/>
    </ligand>
</feature>
<feature type="binding site" evidence="1">
    <location>
        <position position="259"/>
    </location>
    <ligand>
        <name>NADPH</name>
        <dbReference type="ChEBI" id="CHEBI:57783"/>
    </ligand>
</feature>
<feature type="binding site" evidence="1">
    <location>
        <position position="259"/>
    </location>
    <ligand>
        <name>sn-glycerol 3-phosphate</name>
        <dbReference type="ChEBI" id="CHEBI:57597"/>
    </ligand>
</feature>
<feature type="binding site" evidence="1">
    <location>
        <position position="260"/>
    </location>
    <ligand>
        <name>sn-glycerol 3-phosphate</name>
        <dbReference type="ChEBI" id="CHEBI:57597"/>
    </ligand>
</feature>
<feature type="binding site" evidence="1">
    <location>
        <position position="283"/>
    </location>
    <ligand>
        <name>NADPH</name>
        <dbReference type="ChEBI" id="CHEBI:57783"/>
    </ligand>
</feature>
<feature type="binding site" evidence="1">
    <location>
        <position position="285"/>
    </location>
    <ligand>
        <name>NADPH</name>
        <dbReference type="ChEBI" id="CHEBI:57783"/>
    </ligand>
</feature>
<evidence type="ECO:0000255" key="1">
    <source>
        <dbReference type="HAMAP-Rule" id="MF_00394"/>
    </source>
</evidence>
<organism>
    <name type="scientific">Escherichia coli (strain UTI89 / UPEC)</name>
    <dbReference type="NCBI Taxonomy" id="364106"/>
    <lineage>
        <taxon>Bacteria</taxon>
        <taxon>Pseudomonadati</taxon>
        <taxon>Pseudomonadota</taxon>
        <taxon>Gammaproteobacteria</taxon>
        <taxon>Enterobacterales</taxon>
        <taxon>Enterobacteriaceae</taxon>
        <taxon>Escherichia</taxon>
    </lineage>
</organism>
<gene>
    <name evidence="1" type="primary">gpsA</name>
    <name type="ordered locus">UTI89_C4149</name>
</gene>
<sequence>MNQRNASMTVIGAGSYGTALAITLARNGHEVVLWGHDPEHIATLERDRCNAAFLPDVPFPDTLHLESDLATALAASRNILVVVPSHVFGEVLRQIKPLMRPDARLVWATKGLEAETGRLLQDVAREALGDQIPLAVISGPTFAKELAAGLPTAISLASTDQTFADDLQQLLHCGKSFRVYSNPDFIGVQLGGAVKNVIAIGAGMSDGIGFGANARTALITRGLAEMSRLGAALGADPATFMGMAGLGDLVLTCTDNQSRNRRFGMMLGQGMDVQSAQEKIGQVVEGYRNTKEVRELAHRFGVEMPITEEIYQVLYCGKNAREAALTLLGRARKDERSSH</sequence>
<protein>
    <recommendedName>
        <fullName evidence="1">Glycerol-3-phosphate dehydrogenase [NAD(P)+]</fullName>
        <ecNumber evidence="1">1.1.1.94</ecNumber>
    </recommendedName>
    <alternativeName>
        <fullName evidence="1">NAD(P)(+)-dependent glycerol-3-phosphate dehydrogenase</fullName>
    </alternativeName>
    <alternativeName>
        <fullName evidence="1">NAD(P)H-dependent dihydroxyacetone-phosphate reductase</fullName>
    </alternativeName>
</protein>
<reference key="1">
    <citation type="journal article" date="2006" name="Proc. Natl. Acad. Sci. U.S.A.">
        <title>Identification of genes subject to positive selection in uropathogenic strains of Escherichia coli: a comparative genomics approach.</title>
        <authorList>
            <person name="Chen S.L."/>
            <person name="Hung C.-S."/>
            <person name="Xu J."/>
            <person name="Reigstad C.S."/>
            <person name="Magrini V."/>
            <person name="Sabo A."/>
            <person name="Blasiar D."/>
            <person name="Bieri T."/>
            <person name="Meyer R.R."/>
            <person name="Ozersky P."/>
            <person name="Armstrong J.R."/>
            <person name="Fulton R.S."/>
            <person name="Latreille J.P."/>
            <person name="Spieth J."/>
            <person name="Hooton T.M."/>
            <person name="Mardis E.R."/>
            <person name="Hultgren S.J."/>
            <person name="Gordon J.I."/>
        </authorList>
    </citation>
    <scope>NUCLEOTIDE SEQUENCE [LARGE SCALE GENOMIC DNA]</scope>
    <source>
        <strain>UTI89 / UPEC</strain>
    </source>
</reference>
<name>GPDA_ECOUT</name>
<proteinExistence type="inferred from homology"/>